<organism>
    <name type="scientific">Human herpesvirus 6A (strain Uganda-1102)</name>
    <name type="common">HHV-6 variant A</name>
    <name type="synonym">Human B lymphotropic virus</name>
    <dbReference type="NCBI Taxonomy" id="10370"/>
    <lineage>
        <taxon>Viruses</taxon>
        <taxon>Duplodnaviria</taxon>
        <taxon>Heunggongvirae</taxon>
        <taxon>Peploviricota</taxon>
        <taxon>Herviviricetes</taxon>
        <taxon>Herpesvirales</taxon>
        <taxon>Orthoherpesviridae</taxon>
        <taxon>Betaherpesvirinae</taxon>
        <taxon>Roseolovirus</taxon>
        <taxon>Roseolovirus humanbeta6a</taxon>
        <taxon>Human betaherpesvirus 6A</taxon>
    </lineage>
</organism>
<keyword id="KW-1185">Reference proteome</keyword>
<keyword id="KW-0732">Signal</keyword>
<gene>
    <name type="primary">RJ1</name>
</gene>
<gene>
    <name type="primary">LT1</name>
</gene>
<sequence>MARVMTRGMARVSTLATVRVSTLARARFSVRDSFMVSVIVGVRVRVDVLVRVNVLVRARPRVRVRARPRVRVRVRARPRVRVRVRASPRVRVRVITPPFFSPPGGFDVIFKTRGIPSPGETVLDKKVSRPWRGLTSRRGATMI</sequence>
<comment type="caution">
    <text evidence="2">RJ1 and LT1 genes probably code for identical proteins.</text>
</comment>
<dbReference type="EMBL" id="X83413">
    <property type="status" value="NOT_ANNOTATED_CDS"/>
    <property type="molecule type" value="Genomic_DNA"/>
</dbReference>
<dbReference type="Proteomes" id="UP000009295">
    <property type="component" value="Segment"/>
</dbReference>
<proteinExistence type="inferred from homology"/>
<feature type="signal peptide" evidence="1">
    <location>
        <begin position="1"/>
        <end position="26"/>
    </location>
</feature>
<feature type="chain" id="PRO_0000343646" description="Protein RJ1">
    <location>
        <begin position="27"/>
        <end position="143"/>
    </location>
</feature>
<protein>
    <recommendedName>
        <fullName>Protein RJ1</fullName>
    </recommendedName>
    <alternativeName>
        <fullName>Protein LT1</fullName>
    </alternativeName>
</protein>
<name>RJ1_HHV6U</name>
<evidence type="ECO:0000255" key="1"/>
<evidence type="ECO:0000305" key="2"/>
<reference key="1">
    <citation type="journal article" date="1995" name="Virology">
        <title>The DNA sequence of human herpesvirus-6: structure, coding content, and genome evolution.</title>
        <authorList>
            <person name="Gompels U.A."/>
            <person name="Nicholas J."/>
            <person name="Lawrence G.L."/>
            <person name="Jones M."/>
            <person name="Thomson B.J."/>
            <person name="Martin M.E.D."/>
            <person name="Efstathiou S."/>
            <person name="Craxton M.A."/>
            <person name="Macaulay H.A."/>
        </authorList>
    </citation>
    <scope>NUCLEOTIDE SEQUENCE [LARGE SCALE GENOMIC DNA] (RJ1)</scope>
    <scope>NUCLEOTIDE SEQUENCE [LARGE SCALE GENOMIC DNA] OF 1-113 (LT1)</scope>
</reference>
<reference key="2">
    <citation type="journal article" date="1999" name="J. Virol.">
        <title>Comparison of the complete DNA sequences of human herpesvirus 6 variants A and B.</title>
        <authorList>
            <person name="Isegawa Y."/>
            <person name="Mukai T."/>
            <person name="Nakano K."/>
            <person name="Kagawa M."/>
            <person name="Chen J."/>
            <person name="Mori Y."/>
            <person name="Sunagawa T."/>
            <person name="Kawanishi K."/>
            <person name="Sashihara J."/>
            <person name="Hata A."/>
            <person name="Zou P."/>
            <person name="Kosuge H."/>
            <person name="Yamanishi K."/>
        </authorList>
    </citation>
    <scope>IDENTIFICATION</scope>
</reference>
<organismHost>
    <name type="scientific">Homo sapiens</name>
    <name type="common">Human</name>
    <dbReference type="NCBI Taxonomy" id="9606"/>
</organismHost>
<accession>Q69577</accession>
<accession>Q69544</accession>